<organism>
    <name type="scientific">Rickettsia prowazekii (strain Madrid E)</name>
    <dbReference type="NCBI Taxonomy" id="272947"/>
    <lineage>
        <taxon>Bacteria</taxon>
        <taxon>Pseudomonadati</taxon>
        <taxon>Pseudomonadota</taxon>
        <taxon>Alphaproteobacteria</taxon>
        <taxon>Rickettsiales</taxon>
        <taxon>Rickettsiaceae</taxon>
        <taxon>Rickettsieae</taxon>
        <taxon>Rickettsia</taxon>
        <taxon>typhus group</taxon>
    </lineage>
</organism>
<feature type="chain" id="PRO_0000150276" description="Cysteine desulfurase IscS">
    <location>
        <begin position="1"/>
        <end position="410"/>
    </location>
</feature>
<feature type="active site" description="Cysteine persulfide intermediate" evidence="1">
    <location>
        <position position="334"/>
    </location>
</feature>
<feature type="binding site" evidence="1">
    <location>
        <begin position="80"/>
        <end position="81"/>
    </location>
    <ligand>
        <name>pyridoxal 5'-phosphate</name>
        <dbReference type="ChEBI" id="CHEBI:597326"/>
    </ligand>
</feature>
<feature type="binding site" evidence="1">
    <location>
        <position position="160"/>
    </location>
    <ligand>
        <name>pyridoxal 5'-phosphate</name>
        <dbReference type="ChEBI" id="CHEBI:597326"/>
    </ligand>
</feature>
<feature type="binding site" evidence="1">
    <location>
        <position position="188"/>
    </location>
    <ligand>
        <name>pyridoxal 5'-phosphate</name>
        <dbReference type="ChEBI" id="CHEBI:597326"/>
    </ligand>
</feature>
<feature type="binding site" evidence="1">
    <location>
        <begin position="208"/>
        <end position="210"/>
    </location>
    <ligand>
        <name>pyridoxal 5'-phosphate</name>
        <dbReference type="ChEBI" id="CHEBI:597326"/>
    </ligand>
</feature>
<feature type="binding site" evidence="1">
    <location>
        <position position="248"/>
    </location>
    <ligand>
        <name>pyridoxal 5'-phosphate</name>
        <dbReference type="ChEBI" id="CHEBI:597326"/>
    </ligand>
</feature>
<feature type="binding site" description="via persulfide group" evidence="1">
    <location>
        <position position="334"/>
    </location>
    <ligand>
        <name>[2Fe-2S] cluster</name>
        <dbReference type="ChEBI" id="CHEBI:190135"/>
        <note>ligand shared with IscU</note>
    </ligand>
</feature>
<feature type="modified residue" description="N6-(pyridoxal phosphate)lysine" evidence="1">
    <location>
        <position position="211"/>
    </location>
</feature>
<accession>Q9ZD60</accession>
<gene>
    <name evidence="1" type="primary">iscS</name>
    <name type="ordered locus">RP486</name>
</gene>
<proteinExistence type="inferred from homology"/>
<protein>
    <recommendedName>
        <fullName evidence="1">Cysteine desulfurase IscS</fullName>
        <ecNumber evidence="1">2.8.1.7</ecNumber>
    </recommendedName>
</protein>
<sequence length="410" mass="45598">MNQQLKNLTLPIYMDYQSTTPIDPRVMEAMLPYFTTKFGNPHSRSHSFGWEAENAVENARSMVAKVIGADSKEIIFTSGATESNNLVIKGIAKFYGNKKKHIITLVSEHKCVLNACRHLEQEGIKITYLPIKSNGIIDLETLKNAITDQTLLVSVMAVNNEIGVIQPLKEIGKICRERNVFFHSDIAQGFGKIPINVNECNIDLASISGHKIYGPKGIGALYIRKKPRVRVTPLINGGGQERGMRSGTLPTPLIVGLGIASEIAYNEMEKDTQHVNYLFDRFLNNIHSKISEVYLNGDKDQRYKGNLNLSFAGVEGESIILAIKDLAVSSGSACTSASLEPSYVLRSIGISEELAHTSIRFGIGRFTTEQEIDYAVNLVCSKIDKLRRLSPLWEMMQEGVDLKKIRWTAH</sequence>
<dbReference type="EC" id="2.8.1.7" evidence="1"/>
<dbReference type="EMBL" id="AJ235272">
    <property type="protein sequence ID" value="CAA14939.1"/>
    <property type="molecule type" value="Genomic_DNA"/>
</dbReference>
<dbReference type="PIR" id="A71652">
    <property type="entry name" value="A71652"/>
</dbReference>
<dbReference type="RefSeq" id="NP_220863.1">
    <property type="nucleotide sequence ID" value="NC_000963.1"/>
</dbReference>
<dbReference type="RefSeq" id="WP_004597728.1">
    <property type="nucleotide sequence ID" value="NC_000963.1"/>
</dbReference>
<dbReference type="SMR" id="Q9ZD60"/>
<dbReference type="STRING" id="272947.gene:17555566"/>
<dbReference type="EnsemblBacteria" id="CAA14939">
    <property type="protein sequence ID" value="CAA14939"/>
    <property type="gene ID" value="CAA14939"/>
</dbReference>
<dbReference type="KEGG" id="rpr:RP486"/>
<dbReference type="PATRIC" id="fig|272947.5.peg.496"/>
<dbReference type="eggNOG" id="COG1104">
    <property type="taxonomic scope" value="Bacteria"/>
</dbReference>
<dbReference type="HOGENOM" id="CLU_003433_0_2_5"/>
<dbReference type="OrthoDB" id="9808002at2"/>
<dbReference type="UniPathway" id="UPA00266"/>
<dbReference type="Proteomes" id="UP000002480">
    <property type="component" value="Chromosome"/>
</dbReference>
<dbReference type="GO" id="GO:1990221">
    <property type="term" value="C:L-cysteine desulfurase complex"/>
    <property type="evidence" value="ECO:0007669"/>
    <property type="project" value="UniProtKB-ARBA"/>
</dbReference>
<dbReference type="GO" id="GO:0051537">
    <property type="term" value="F:2 iron, 2 sulfur cluster binding"/>
    <property type="evidence" value="ECO:0007669"/>
    <property type="project" value="UniProtKB-UniRule"/>
</dbReference>
<dbReference type="GO" id="GO:0031071">
    <property type="term" value="F:cysteine desulfurase activity"/>
    <property type="evidence" value="ECO:0007669"/>
    <property type="project" value="UniProtKB-UniRule"/>
</dbReference>
<dbReference type="GO" id="GO:0046872">
    <property type="term" value="F:metal ion binding"/>
    <property type="evidence" value="ECO:0007669"/>
    <property type="project" value="UniProtKB-KW"/>
</dbReference>
<dbReference type="GO" id="GO:0030170">
    <property type="term" value="F:pyridoxal phosphate binding"/>
    <property type="evidence" value="ECO:0007669"/>
    <property type="project" value="UniProtKB-UniRule"/>
</dbReference>
<dbReference type="GO" id="GO:0044571">
    <property type="term" value="P:[2Fe-2S] cluster assembly"/>
    <property type="evidence" value="ECO:0007669"/>
    <property type="project" value="UniProtKB-UniRule"/>
</dbReference>
<dbReference type="FunFam" id="3.40.640.10:FF:000003">
    <property type="entry name" value="Cysteine desulfurase IscS"/>
    <property type="match status" value="1"/>
</dbReference>
<dbReference type="FunFam" id="3.90.1150.10:FF:000002">
    <property type="entry name" value="Cysteine desulfurase IscS"/>
    <property type="match status" value="1"/>
</dbReference>
<dbReference type="Gene3D" id="3.90.1150.10">
    <property type="entry name" value="Aspartate Aminotransferase, domain 1"/>
    <property type="match status" value="1"/>
</dbReference>
<dbReference type="Gene3D" id="3.40.640.10">
    <property type="entry name" value="Type I PLP-dependent aspartate aminotransferase-like (Major domain)"/>
    <property type="match status" value="1"/>
</dbReference>
<dbReference type="HAMAP" id="MF_00331">
    <property type="entry name" value="Cys_desulf_IscS"/>
    <property type="match status" value="1"/>
</dbReference>
<dbReference type="InterPro" id="IPR000192">
    <property type="entry name" value="Aminotrans_V_dom"/>
</dbReference>
<dbReference type="InterPro" id="IPR020578">
    <property type="entry name" value="Aminotrans_V_PyrdxlP_BS"/>
</dbReference>
<dbReference type="InterPro" id="IPR010240">
    <property type="entry name" value="Cys_deSase_IscS"/>
</dbReference>
<dbReference type="InterPro" id="IPR016454">
    <property type="entry name" value="Cysteine_dSase"/>
</dbReference>
<dbReference type="InterPro" id="IPR015424">
    <property type="entry name" value="PyrdxlP-dep_Trfase"/>
</dbReference>
<dbReference type="InterPro" id="IPR015421">
    <property type="entry name" value="PyrdxlP-dep_Trfase_major"/>
</dbReference>
<dbReference type="InterPro" id="IPR015422">
    <property type="entry name" value="PyrdxlP-dep_Trfase_small"/>
</dbReference>
<dbReference type="NCBIfam" id="TIGR02006">
    <property type="entry name" value="IscS"/>
    <property type="match status" value="1"/>
</dbReference>
<dbReference type="NCBIfam" id="NF002806">
    <property type="entry name" value="PRK02948.1"/>
    <property type="match status" value="1"/>
</dbReference>
<dbReference type="NCBIfam" id="NF010611">
    <property type="entry name" value="PRK14012.1"/>
    <property type="match status" value="1"/>
</dbReference>
<dbReference type="PANTHER" id="PTHR11601:SF34">
    <property type="entry name" value="CYSTEINE DESULFURASE"/>
    <property type="match status" value="1"/>
</dbReference>
<dbReference type="PANTHER" id="PTHR11601">
    <property type="entry name" value="CYSTEINE DESULFURYLASE FAMILY MEMBER"/>
    <property type="match status" value="1"/>
</dbReference>
<dbReference type="Pfam" id="PF00266">
    <property type="entry name" value="Aminotran_5"/>
    <property type="match status" value="1"/>
</dbReference>
<dbReference type="PIRSF" id="PIRSF005572">
    <property type="entry name" value="NifS"/>
    <property type="match status" value="1"/>
</dbReference>
<dbReference type="SUPFAM" id="SSF53383">
    <property type="entry name" value="PLP-dependent transferases"/>
    <property type="match status" value="1"/>
</dbReference>
<dbReference type="PROSITE" id="PS00595">
    <property type="entry name" value="AA_TRANSFER_CLASS_5"/>
    <property type="match status" value="1"/>
</dbReference>
<reference key="1">
    <citation type="journal article" date="1998" name="Nature">
        <title>The genome sequence of Rickettsia prowazekii and the origin of mitochondria.</title>
        <authorList>
            <person name="Andersson S.G.E."/>
            <person name="Zomorodipour A."/>
            <person name="Andersson J.O."/>
            <person name="Sicheritz-Ponten T."/>
            <person name="Alsmark U.C.M."/>
            <person name="Podowski R.M."/>
            <person name="Naeslund A.K."/>
            <person name="Eriksson A.-S."/>
            <person name="Winkler H.H."/>
            <person name="Kurland C.G."/>
        </authorList>
    </citation>
    <scope>NUCLEOTIDE SEQUENCE [LARGE SCALE GENOMIC DNA]</scope>
    <source>
        <strain>Madrid E</strain>
    </source>
</reference>
<name>ISCS_RICPR</name>
<keyword id="KW-0001">2Fe-2S</keyword>
<keyword id="KW-0963">Cytoplasm</keyword>
<keyword id="KW-0408">Iron</keyword>
<keyword id="KW-0411">Iron-sulfur</keyword>
<keyword id="KW-0479">Metal-binding</keyword>
<keyword id="KW-0663">Pyridoxal phosphate</keyword>
<keyword id="KW-1185">Reference proteome</keyword>
<keyword id="KW-0808">Transferase</keyword>
<comment type="function">
    <text evidence="1">Master enzyme that delivers sulfur to a number of partners involved in Fe-S cluster assembly, tRNA modification or cofactor biosynthesis. Catalyzes the removal of elemental sulfur atoms from cysteine to produce alanine. Functions as a sulfur delivery protein for Fe-S cluster synthesis onto IscU, an Fe-S scaffold assembly protein, as well as other S acceptor proteins.</text>
</comment>
<comment type="catalytic activity">
    <reaction evidence="1">
        <text>(sulfur carrier)-H + L-cysteine = (sulfur carrier)-SH + L-alanine</text>
        <dbReference type="Rhea" id="RHEA:43892"/>
        <dbReference type="Rhea" id="RHEA-COMP:14737"/>
        <dbReference type="Rhea" id="RHEA-COMP:14739"/>
        <dbReference type="ChEBI" id="CHEBI:29917"/>
        <dbReference type="ChEBI" id="CHEBI:35235"/>
        <dbReference type="ChEBI" id="CHEBI:57972"/>
        <dbReference type="ChEBI" id="CHEBI:64428"/>
        <dbReference type="EC" id="2.8.1.7"/>
    </reaction>
</comment>
<comment type="cofactor">
    <cofactor evidence="1">
        <name>pyridoxal 5'-phosphate</name>
        <dbReference type="ChEBI" id="CHEBI:597326"/>
    </cofactor>
</comment>
<comment type="pathway">
    <text evidence="1">Cofactor biosynthesis; iron-sulfur cluster biosynthesis.</text>
</comment>
<comment type="subunit">
    <text evidence="1">Homodimer. Forms a heterotetramer with IscU, interacts with other sulfur acceptors.</text>
</comment>
<comment type="subcellular location">
    <subcellularLocation>
        <location evidence="1">Cytoplasm</location>
    </subcellularLocation>
</comment>
<comment type="similarity">
    <text evidence="1">Belongs to the class-V pyridoxal-phosphate-dependent aminotransferase family. NifS/IscS subfamily.</text>
</comment>
<evidence type="ECO:0000255" key="1">
    <source>
        <dbReference type="HAMAP-Rule" id="MF_00331"/>
    </source>
</evidence>